<evidence type="ECO:0000255" key="1">
    <source>
        <dbReference type="HAMAP-Rule" id="MF_01702"/>
    </source>
</evidence>
<name>PSTB_MYCCT</name>
<sequence length="269" mass="30422">MNNEQLITNVKPKKEPLKTAIEIKDFNFFYNKGKTQSLFNINMEIKEKSITTFIGPSGCGKTTLLKSINRLNDLIDGVKMSGAIKIFDKDIFASDIDITKLRTEVGMVFQKPNPFPISIYDNVVYGLRSLGIKDKAILDQICEESLIKAALWDEVKDILNSPALGLSGGQQQRLCIARAIAMKPKILLMDEPTSALDPIATLKVEELVLDLKKDYTIVMVTHSLQQATRISDYTAYFLKGELIEFNKTKKIFTNPKDRRTENYISGRYE</sequence>
<keyword id="KW-0067">ATP-binding</keyword>
<keyword id="KW-1003">Cell membrane</keyword>
<keyword id="KW-0472">Membrane</keyword>
<keyword id="KW-0547">Nucleotide-binding</keyword>
<keyword id="KW-0592">Phosphate transport</keyword>
<keyword id="KW-1278">Translocase</keyword>
<keyword id="KW-0813">Transport</keyword>
<protein>
    <recommendedName>
        <fullName evidence="1">Phosphate import ATP-binding protein PstB</fullName>
        <ecNumber evidence="1">7.3.2.1</ecNumber>
    </recommendedName>
    <alternativeName>
        <fullName evidence="1">ABC phosphate transporter</fullName>
    </alternativeName>
    <alternativeName>
        <fullName evidence="1">Phosphate-transporting ATPase</fullName>
    </alternativeName>
</protein>
<proteinExistence type="inferred from homology"/>
<accession>Q2SS06</accession>
<gene>
    <name evidence="1" type="primary">pstB</name>
    <name type="ordered locus">MCAP_0483</name>
</gene>
<organism>
    <name type="scientific">Mycoplasma capricolum subsp. capricolum (strain California kid / ATCC 27343 / NCTC 10154)</name>
    <dbReference type="NCBI Taxonomy" id="340047"/>
    <lineage>
        <taxon>Bacteria</taxon>
        <taxon>Bacillati</taxon>
        <taxon>Mycoplasmatota</taxon>
        <taxon>Mollicutes</taxon>
        <taxon>Mycoplasmataceae</taxon>
        <taxon>Mycoplasma</taxon>
    </lineage>
</organism>
<feature type="chain" id="PRO_0000272480" description="Phosphate import ATP-binding protein PstB">
    <location>
        <begin position="1"/>
        <end position="269"/>
    </location>
</feature>
<feature type="domain" description="ABC transporter" evidence="1">
    <location>
        <begin position="21"/>
        <end position="264"/>
    </location>
</feature>
<feature type="binding site" evidence="1">
    <location>
        <begin position="55"/>
        <end position="62"/>
    </location>
    <ligand>
        <name>ATP</name>
        <dbReference type="ChEBI" id="CHEBI:30616"/>
    </ligand>
</feature>
<reference key="1">
    <citation type="submission" date="2005-09" db="EMBL/GenBank/DDBJ databases">
        <authorList>
            <person name="Glass J.I."/>
            <person name="Lartigue C."/>
            <person name="Pfannkoch C."/>
            <person name="Baden-Tillson H."/>
            <person name="Smith H.O."/>
            <person name="Venter J.C."/>
            <person name="Roske K."/>
            <person name="Wise K.S."/>
            <person name="Calcutt M.J."/>
            <person name="Nelson W.C."/>
            <person name="Nierman W.C."/>
        </authorList>
    </citation>
    <scope>NUCLEOTIDE SEQUENCE [LARGE SCALE GENOMIC DNA]</scope>
    <source>
        <strain>California kid / ATCC 27343 / NCTC 10154</strain>
    </source>
</reference>
<comment type="function">
    <text evidence="1">Part of the ABC transporter complex PstSACB involved in phosphate import. Responsible for energy coupling to the transport system.</text>
</comment>
<comment type="catalytic activity">
    <reaction evidence="1">
        <text>phosphate(out) + ATP + H2O = ADP + 2 phosphate(in) + H(+)</text>
        <dbReference type="Rhea" id="RHEA:24440"/>
        <dbReference type="ChEBI" id="CHEBI:15377"/>
        <dbReference type="ChEBI" id="CHEBI:15378"/>
        <dbReference type="ChEBI" id="CHEBI:30616"/>
        <dbReference type="ChEBI" id="CHEBI:43474"/>
        <dbReference type="ChEBI" id="CHEBI:456216"/>
        <dbReference type="EC" id="7.3.2.1"/>
    </reaction>
</comment>
<comment type="subunit">
    <text evidence="1">The complex is composed of two ATP-binding proteins (PstB), two transmembrane proteins (PstC and PstA) and a solute-binding protein (PstS).</text>
</comment>
<comment type="subcellular location">
    <subcellularLocation>
        <location evidence="1">Cell membrane</location>
        <topology evidence="1">Peripheral membrane protein</topology>
    </subcellularLocation>
</comment>
<comment type="similarity">
    <text evidence="1">Belongs to the ABC transporter superfamily. Phosphate importer (TC 3.A.1.7) family.</text>
</comment>
<dbReference type="EC" id="7.3.2.1" evidence="1"/>
<dbReference type="EMBL" id="CP000123">
    <property type="protein sequence ID" value="ABC01360.1"/>
    <property type="molecule type" value="Genomic_DNA"/>
</dbReference>
<dbReference type="RefSeq" id="WP_011387356.1">
    <property type="nucleotide sequence ID" value="NC_007633.1"/>
</dbReference>
<dbReference type="SMR" id="Q2SS06"/>
<dbReference type="GeneID" id="23778561"/>
<dbReference type="KEGG" id="mcp:MCAP_0483"/>
<dbReference type="HOGENOM" id="CLU_000604_1_22_14"/>
<dbReference type="PhylomeDB" id="Q2SS06"/>
<dbReference type="Proteomes" id="UP000001928">
    <property type="component" value="Chromosome"/>
</dbReference>
<dbReference type="GO" id="GO:0005886">
    <property type="term" value="C:plasma membrane"/>
    <property type="evidence" value="ECO:0007669"/>
    <property type="project" value="UniProtKB-SubCell"/>
</dbReference>
<dbReference type="GO" id="GO:0005524">
    <property type="term" value="F:ATP binding"/>
    <property type="evidence" value="ECO:0007669"/>
    <property type="project" value="UniProtKB-KW"/>
</dbReference>
<dbReference type="GO" id="GO:0016887">
    <property type="term" value="F:ATP hydrolysis activity"/>
    <property type="evidence" value="ECO:0007669"/>
    <property type="project" value="InterPro"/>
</dbReference>
<dbReference type="GO" id="GO:0015415">
    <property type="term" value="F:ATPase-coupled phosphate ion transmembrane transporter activity"/>
    <property type="evidence" value="ECO:0007669"/>
    <property type="project" value="UniProtKB-EC"/>
</dbReference>
<dbReference type="GO" id="GO:0035435">
    <property type="term" value="P:phosphate ion transmembrane transport"/>
    <property type="evidence" value="ECO:0007669"/>
    <property type="project" value="InterPro"/>
</dbReference>
<dbReference type="CDD" id="cd03260">
    <property type="entry name" value="ABC_PstB_phosphate_transporter"/>
    <property type="match status" value="1"/>
</dbReference>
<dbReference type="Gene3D" id="3.40.50.300">
    <property type="entry name" value="P-loop containing nucleotide triphosphate hydrolases"/>
    <property type="match status" value="1"/>
</dbReference>
<dbReference type="InterPro" id="IPR003593">
    <property type="entry name" value="AAA+_ATPase"/>
</dbReference>
<dbReference type="InterPro" id="IPR003439">
    <property type="entry name" value="ABC_transporter-like_ATP-bd"/>
</dbReference>
<dbReference type="InterPro" id="IPR017871">
    <property type="entry name" value="ABC_transporter-like_CS"/>
</dbReference>
<dbReference type="InterPro" id="IPR027417">
    <property type="entry name" value="P-loop_NTPase"/>
</dbReference>
<dbReference type="InterPro" id="IPR005670">
    <property type="entry name" value="PstB-like"/>
</dbReference>
<dbReference type="NCBIfam" id="TIGR00972">
    <property type="entry name" value="3a0107s01c2"/>
    <property type="match status" value="1"/>
</dbReference>
<dbReference type="PANTHER" id="PTHR43423">
    <property type="entry name" value="ABC TRANSPORTER I FAMILY MEMBER 17"/>
    <property type="match status" value="1"/>
</dbReference>
<dbReference type="PANTHER" id="PTHR43423:SF1">
    <property type="entry name" value="ABC TRANSPORTER I FAMILY MEMBER 17"/>
    <property type="match status" value="1"/>
</dbReference>
<dbReference type="Pfam" id="PF00005">
    <property type="entry name" value="ABC_tran"/>
    <property type="match status" value="1"/>
</dbReference>
<dbReference type="SMART" id="SM00382">
    <property type="entry name" value="AAA"/>
    <property type="match status" value="1"/>
</dbReference>
<dbReference type="SUPFAM" id="SSF52540">
    <property type="entry name" value="P-loop containing nucleoside triphosphate hydrolases"/>
    <property type="match status" value="1"/>
</dbReference>
<dbReference type="PROSITE" id="PS00211">
    <property type="entry name" value="ABC_TRANSPORTER_1"/>
    <property type="match status" value="1"/>
</dbReference>
<dbReference type="PROSITE" id="PS50893">
    <property type="entry name" value="ABC_TRANSPORTER_2"/>
    <property type="match status" value="1"/>
</dbReference>
<dbReference type="PROSITE" id="PS51238">
    <property type="entry name" value="PSTB"/>
    <property type="match status" value="1"/>
</dbReference>